<comment type="subcellular location">
    <subcellularLocation>
        <location evidence="1">Cytoplasm</location>
    </subcellularLocation>
</comment>
<comment type="domain">
    <text evidence="3">Contains a bacterial GIY-YIG-like domain.</text>
</comment>
<organism>
    <name type="scientific">Arabidopsis thaliana</name>
    <name type="common">Mouse-ear cress</name>
    <dbReference type="NCBI Taxonomy" id="3702"/>
    <lineage>
        <taxon>Eukaryota</taxon>
        <taxon>Viridiplantae</taxon>
        <taxon>Streptophyta</taxon>
        <taxon>Embryophyta</taxon>
        <taxon>Tracheophyta</taxon>
        <taxon>Spermatophyta</taxon>
        <taxon>Magnoliopsida</taxon>
        <taxon>eudicotyledons</taxon>
        <taxon>Gunneridae</taxon>
        <taxon>Pentapetalae</taxon>
        <taxon>rosids</taxon>
        <taxon>malvids</taxon>
        <taxon>Brassicales</taxon>
        <taxon>Brassicaceae</taxon>
        <taxon>Camelineae</taxon>
        <taxon>Arabidopsis</taxon>
    </lineage>
</organism>
<evidence type="ECO:0000269" key="1">
    <source>
    </source>
</evidence>
<evidence type="ECO:0000303" key="2">
    <source>
    </source>
</evidence>
<evidence type="ECO:0000305" key="3">
    <source>
    </source>
</evidence>
<evidence type="ECO:0000312" key="4">
    <source>
        <dbReference type="Araport" id="AT5G56770"/>
    </source>
</evidence>
<evidence type="ECO:0000312" key="5">
    <source>
        <dbReference type="EMBL" id="BAB09895.1"/>
    </source>
</evidence>
<reference key="1">
    <citation type="journal article" date="1998" name="DNA Res.">
        <title>Structural analysis of Arabidopsis thaliana chromosome 5. VI. Sequence features of the regions of 1,367,185 bp covered by 19 physically assigned P1 and TAC clones.</title>
        <authorList>
            <person name="Kotani H."/>
            <person name="Nakamura Y."/>
            <person name="Sato S."/>
            <person name="Asamizu E."/>
            <person name="Kaneko T."/>
            <person name="Miyajima N."/>
            <person name="Tabata S."/>
        </authorList>
    </citation>
    <scope>NUCLEOTIDE SEQUENCE [LARGE SCALE GENOMIC DNA]</scope>
    <source>
        <strain>cv. Columbia</strain>
    </source>
</reference>
<reference key="2">
    <citation type="journal article" date="2017" name="Plant J.">
        <title>Araport11: a complete reannotation of the Arabidopsis thaliana reference genome.</title>
        <authorList>
            <person name="Cheng C.Y."/>
            <person name="Krishnakumar V."/>
            <person name="Chan A.P."/>
            <person name="Thibaud-Nissen F."/>
            <person name="Schobel S."/>
            <person name="Town C.D."/>
        </authorList>
    </citation>
    <scope>GENOME REANNOTATION</scope>
    <source>
        <strain>cv. Columbia</strain>
    </source>
</reference>
<reference key="3">
    <citation type="journal article" date="2008" name="Dev. Biol.">
        <title>EFFECTOR OF TRANSCRIPTION2 is involved in xylem differentiation and includes a functional DNA single strand cutting domain.</title>
        <authorList>
            <person name="Ivanov R."/>
            <person name="Tiedemann J."/>
            <person name="Czihal A."/>
            <person name="Schallau A."/>
            <person name="Diep L.H."/>
            <person name="Mock H.P."/>
            <person name="Claus B."/>
            <person name="Tewes A."/>
            <person name="Baeumlein H."/>
        </authorList>
    </citation>
    <scope>SUBCELLULAR LOCATION</scope>
    <scope>GIY-YIG DOMAIN</scope>
</reference>
<dbReference type="EMBL" id="AB013392">
    <property type="protein sequence ID" value="BAB09895.1"/>
    <property type="molecule type" value="Genomic_DNA"/>
</dbReference>
<dbReference type="EMBL" id="CP002688">
    <property type="protein sequence ID" value="AED96805.1"/>
    <property type="molecule type" value="Genomic_DNA"/>
</dbReference>
<dbReference type="RefSeq" id="NP_200488.1">
    <property type="nucleotide sequence ID" value="NM_125060.1"/>
</dbReference>
<dbReference type="FunCoup" id="Q9FJT6">
    <property type="interactions" value="2"/>
</dbReference>
<dbReference type="STRING" id="3702.Q9FJT6"/>
<dbReference type="PaxDb" id="3702-AT5G56770.1"/>
<dbReference type="EnsemblPlants" id="AT5G56770.1">
    <property type="protein sequence ID" value="AT5G56770.1"/>
    <property type="gene ID" value="AT5G56770"/>
</dbReference>
<dbReference type="GeneID" id="835779"/>
<dbReference type="Gramene" id="AT5G56770.1">
    <property type="protein sequence ID" value="AT5G56770.1"/>
    <property type="gene ID" value="AT5G56770"/>
</dbReference>
<dbReference type="KEGG" id="ath:AT5G56770"/>
<dbReference type="Araport" id="AT5G56770"/>
<dbReference type="TAIR" id="AT5G56770">
    <property type="gene designation" value="ET3"/>
</dbReference>
<dbReference type="eggNOG" id="ENOG502QXNF">
    <property type="taxonomic scope" value="Eukaryota"/>
</dbReference>
<dbReference type="HOGENOM" id="CLU_095836_0_0_1"/>
<dbReference type="InParanoid" id="Q9FJT6"/>
<dbReference type="OMA" id="NHIRHTI"/>
<dbReference type="PhylomeDB" id="Q9FJT6"/>
<dbReference type="PRO" id="PR:Q9FJT6"/>
<dbReference type="Proteomes" id="UP000006548">
    <property type="component" value="Chromosome 5"/>
</dbReference>
<dbReference type="ExpressionAtlas" id="Q9FJT6">
    <property type="expression patterns" value="differential"/>
</dbReference>
<dbReference type="GO" id="GO:0005737">
    <property type="term" value="C:cytoplasm"/>
    <property type="evidence" value="ECO:0000314"/>
    <property type="project" value="UniProtKB"/>
</dbReference>
<dbReference type="GO" id="GO:0003677">
    <property type="term" value="F:DNA binding"/>
    <property type="evidence" value="ECO:0007669"/>
    <property type="project" value="InterPro"/>
</dbReference>
<dbReference type="GO" id="GO:0006355">
    <property type="term" value="P:regulation of DNA-templated transcription"/>
    <property type="evidence" value="ECO:0007669"/>
    <property type="project" value="InterPro"/>
</dbReference>
<dbReference type="InterPro" id="IPR038909">
    <property type="entry name" value="Effector_transcript"/>
</dbReference>
<dbReference type="PANTHER" id="PTHR35133">
    <property type="entry name" value="PROTEIN EFFECTOR OF TRANSCRIPTION 2-RELATED"/>
    <property type="match status" value="1"/>
</dbReference>
<dbReference type="PANTHER" id="PTHR35133:SF1">
    <property type="entry name" value="PROTEIN EFFECTOR OF TRANSCRIPTION 2-RELATED"/>
    <property type="match status" value="1"/>
</dbReference>
<dbReference type="Pfam" id="PF19239">
    <property type="entry name" value="GIY_YIG_domain"/>
    <property type="match status" value="1"/>
</dbReference>
<accession>Q9FJT6</accession>
<proteinExistence type="predicted"/>
<protein>
    <recommendedName>
        <fullName evidence="2">Protein EFFECTOR OF TRANSCRIPTION 3</fullName>
        <shortName evidence="2">AtET3</shortName>
    </recommendedName>
</protein>
<keyword id="KW-0963">Cytoplasm</keyword>
<keyword id="KW-1185">Reference proteome</keyword>
<name>ET3_ARATH</name>
<gene>
    <name evidence="2" type="primary">ET3</name>
    <name evidence="4" type="ordered locus">At5g56770</name>
    <name evidence="5" type="ORF">MIK19.24</name>
</gene>
<sequence>MSFVLLSKMAKLKFNHIRHTIISTQKSTTIMPGISQLLNNRLIGKEFSSAVPTMFKREDYKLTIHDIAFSKWRNLIRHNDWKDFNNRKERVRRYRHEDLPPQRCTGLYELGVGVIGQDQGQNFDPDNNVLGVYVGQCVDVKSRLQDYGRRGGHLPSGLYEDIFSEGYSVFYRWAPEAAATEGMLLSTFDYAWNTCSNGERRHLELQKLGDPEFMSKRKSQVLVPSIRDQVVTIKVEKSNYTFLTSTLKVMRPFG</sequence>
<feature type="chain" id="PRO_0000436020" description="Protein EFFECTOR OF TRANSCRIPTION 3">
    <location>
        <begin position="1"/>
        <end position="254"/>
    </location>
</feature>
<feature type="domain" description="GIY-YIG" evidence="3">
    <location>
        <begin position="103"/>
        <end position="152"/>
    </location>
</feature>